<organism>
    <name type="scientific">Staphylococcus aureus (strain USA300)</name>
    <dbReference type="NCBI Taxonomy" id="367830"/>
    <lineage>
        <taxon>Bacteria</taxon>
        <taxon>Bacillati</taxon>
        <taxon>Bacillota</taxon>
        <taxon>Bacilli</taxon>
        <taxon>Bacillales</taxon>
        <taxon>Staphylococcaceae</taxon>
        <taxon>Staphylococcus</taxon>
    </lineage>
</organism>
<proteinExistence type="inferred from homology"/>
<comment type="function">
    <text evidence="1">Zinc phosphodiesterase, which displays some tRNA 3'-processing endonuclease activity. Probably involved in tRNA maturation, by removing a 3'-trailer from precursor tRNA.</text>
</comment>
<comment type="catalytic activity">
    <reaction evidence="1">
        <text>Endonucleolytic cleavage of RNA, removing extra 3' nucleotides from tRNA precursor, generating 3' termini of tRNAs. A 3'-hydroxy group is left at the tRNA terminus and a 5'-phosphoryl group is left at the trailer molecule.</text>
        <dbReference type="EC" id="3.1.26.11"/>
    </reaction>
</comment>
<comment type="cofactor">
    <cofactor evidence="1">
        <name>Zn(2+)</name>
        <dbReference type="ChEBI" id="CHEBI:29105"/>
    </cofactor>
    <text evidence="1">Binds 2 Zn(2+) ions.</text>
</comment>
<comment type="subunit">
    <text evidence="1">Homodimer.</text>
</comment>
<comment type="similarity">
    <text evidence="1">Belongs to the RNase Z family.</text>
</comment>
<dbReference type="EC" id="3.1.26.11" evidence="1"/>
<dbReference type="EMBL" id="CP000255">
    <property type="protein sequence ID" value="ABD20486.1"/>
    <property type="molecule type" value="Genomic_DNA"/>
</dbReference>
<dbReference type="RefSeq" id="WP_000454064.1">
    <property type="nucleotide sequence ID" value="NZ_CP027476.1"/>
</dbReference>
<dbReference type="SMR" id="Q2FGM9"/>
<dbReference type="KEGG" id="saa:SAUSA300_1453"/>
<dbReference type="HOGENOM" id="CLU_031317_2_0_9"/>
<dbReference type="OMA" id="GTQRQMM"/>
<dbReference type="Proteomes" id="UP000001939">
    <property type="component" value="Chromosome"/>
</dbReference>
<dbReference type="GO" id="GO:0042781">
    <property type="term" value="F:3'-tRNA processing endoribonuclease activity"/>
    <property type="evidence" value="ECO:0007669"/>
    <property type="project" value="UniProtKB-UniRule"/>
</dbReference>
<dbReference type="GO" id="GO:0008270">
    <property type="term" value="F:zinc ion binding"/>
    <property type="evidence" value="ECO:0007669"/>
    <property type="project" value="UniProtKB-UniRule"/>
</dbReference>
<dbReference type="CDD" id="cd07717">
    <property type="entry name" value="RNaseZ_ZiPD-like_MBL-fold"/>
    <property type="match status" value="1"/>
</dbReference>
<dbReference type="FunFam" id="3.60.15.10:FF:000002">
    <property type="entry name" value="Ribonuclease Z"/>
    <property type="match status" value="1"/>
</dbReference>
<dbReference type="Gene3D" id="3.60.15.10">
    <property type="entry name" value="Ribonuclease Z/Hydroxyacylglutathione hydrolase-like"/>
    <property type="match status" value="1"/>
</dbReference>
<dbReference type="HAMAP" id="MF_01818">
    <property type="entry name" value="RNase_Z_BN"/>
    <property type="match status" value="1"/>
</dbReference>
<dbReference type="InterPro" id="IPR036866">
    <property type="entry name" value="RibonucZ/Hydroxyglut_hydro"/>
</dbReference>
<dbReference type="InterPro" id="IPR013471">
    <property type="entry name" value="RNase_Z/BN"/>
</dbReference>
<dbReference type="InterPro" id="IPR027794">
    <property type="entry name" value="tRNase_Z_dom"/>
</dbReference>
<dbReference type="NCBIfam" id="NF000801">
    <property type="entry name" value="PRK00055.1-3"/>
    <property type="match status" value="1"/>
</dbReference>
<dbReference type="NCBIfam" id="TIGR02651">
    <property type="entry name" value="RNase_Z"/>
    <property type="match status" value="1"/>
</dbReference>
<dbReference type="PANTHER" id="PTHR46018">
    <property type="entry name" value="ZINC PHOSPHODIESTERASE ELAC PROTEIN 1"/>
    <property type="match status" value="1"/>
</dbReference>
<dbReference type="PANTHER" id="PTHR46018:SF2">
    <property type="entry name" value="ZINC PHOSPHODIESTERASE ELAC PROTEIN 1"/>
    <property type="match status" value="1"/>
</dbReference>
<dbReference type="Pfam" id="PF13691">
    <property type="entry name" value="Lactamase_B_4"/>
    <property type="match status" value="1"/>
</dbReference>
<dbReference type="SUPFAM" id="SSF56281">
    <property type="entry name" value="Metallo-hydrolase/oxidoreductase"/>
    <property type="match status" value="1"/>
</dbReference>
<evidence type="ECO:0000255" key="1">
    <source>
        <dbReference type="HAMAP-Rule" id="MF_01818"/>
    </source>
</evidence>
<sequence length="306" mass="34585">MEVTFFGTSAGLPTKERNTQAIALNLEPYSNSIWLFDVGEGTQHQILHHAIKLGKVTHIFITHMHGDHIFGLPGLLSSRSFQGGEQKPLTLVGPKGIKAYVEMSMNLSESHLNYPITYIEIDDHLTYHHDGFTVEAHLLNHGIPSYGYRVMAPETTGTINVEALKNIGLEPGPKYQEVKSHDTFEHNGQVYQSKDFRGESKQGPVVAIFGDTKPCSNERVISRDADVMVHEATYIDGEKHLANNYHHSHIEDVFALIKEANVKRTLITHLSNRYNTEDINEIYQTLIQNEDTPNFNFVKDFDSFKI</sequence>
<gene>
    <name evidence="1" type="primary">rnz</name>
    <name type="ordered locus">SAUSA300_1453</name>
</gene>
<reference key="1">
    <citation type="journal article" date="2006" name="Lancet">
        <title>Complete genome sequence of USA300, an epidemic clone of community-acquired meticillin-resistant Staphylococcus aureus.</title>
        <authorList>
            <person name="Diep B.A."/>
            <person name="Gill S.R."/>
            <person name="Chang R.F."/>
            <person name="Phan T.H."/>
            <person name="Chen J.H."/>
            <person name="Davidson M.G."/>
            <person name="Lin F."/>
            <person name="Lin J."/>
            <person name="Carleton H.A."/>
            <person name="Mongodin E.F."/>
            <person name="Sensabaugh G.F."/>
            <person name="Perdreau-Remington F."/>
        </authorList>
    </citation>
    <scope>NUCLEOTIDE SEQUENCE [LARGE SCALE GENOMIC DNA]</scope>
    <source>
        <strain>USA300</strain>
    </source>
</reference>
<keyword id="KW-0255">Endonuclease</keyword>
<keyword id="KW-0378">Hydrolase</keyword>
<keyword id="KW-0479">Metal-binding</keyword>
<keyword id="KW-0540">Nuclease</keyword>
<keyword id="KW-0819">tRNA processing</keyword>
<keyword id="KW-0862">Zinc</keyword>
<feature type="chain" id="PRO_1000070328" description="Ribonuclease Z">
    <location>
        <begin position="1"/>
        <end position="306"/>
    </location>
</feature>
<feature type="active site" description="Proton acceptor" evidence="1">
    <location>
        <position position="67"/>
    </location>
</feature>
<feature type="binding site" evidence="1">
    <location>
        <position position="63"/>
    </location>
    <ligand>
        <name>Zn(2+)</name>
        <dbReference type="ChEBI" id="CHEBI:29105"/>
        <label>1</label>
        <note>catalytic</note>
    </ligand>
</feature>
<feature type="binding site" evidence="1">
    <location>
        <position position="65"/>
    </location>
    <ligand>
        <name>Zn(2+)</name>
        <dbReference type="ChEBI" id="CHEBI:29105"/>
        <label>1</label>
        <note>catalytic</note>
    </ligand>
</feature>
<feature type="binding site" evidence="1">
    <location>
        <position position="67"/>
    </location>
    <ligand>
        <name>Zn(2+)</name>
        <dbReference type="ChEBI" id="CHEBI:29105"/>
        <label>2</label>
        <note>catalytic</note>
    </ligand>
</feature>
<feature type="binding site" evidence="1">
    <location>
        <position position="68"/>
    </location>
    <ligand>
        <name>Zn(2+)</name>
        <dbReference type="ChEBI" id="CHEBI:29105"/>
        <label>2</label>
        <note>catalytic</note>
    </ligand>
</feature>
<feature type="binding site" evidence="1">
    <location>
        <position position="141"/>
    </location>
    <ligand>
        <name>Zn(2+)</name>
        <dbReference type="ChEBI" id="CHEBI:29105"/>
        <label>1</label>
        <note>catalytic</note>
    </ligand>
</feature>
<feature type="binding site" evidence="1">
    <location>
        <position position="211"/>
    </location>
    <ligand>
        <name>Zn(2+)</name>
        <dbReference type="ChEBI" id="CHEBI:29105"/>
        <label>1</label>
        <note>catalytic</note>
    </ligand>
</feature>
<feature type="binding site" evidence="1">
    <location>
        <position position="211"/>
    </location>
    <ligand>
        <name>Zn(2+)</name>
        <dbReference type="ChEBI" id="CHEBI:29105"/>
        <label>2</label>
        <note>catalytic</note>
    </ligand>
</feature>
<feature type="binding site" evidence="1">
    <location>
        <position position="269"/>
    </location>
    <ligand>
        <name>Zn(2+)</name>
        <dbReference type="ChEBI" id="CHEBI:29105"/>
        <label>2</label>
        <note>catalytic</note>
    </ligand>
</feature>
<name>RNZ_STAA3</name>
<accession>Q2FGM9</accession>
<protein>
    <recommendedName>
        <fullName evidence="1">Ribonuclease Z</fullName>
        <shortName evidence="1">RNase Z</shortName>
        <ecNumber evidence="1">3.1.26.11</ecNumber>
    </recommendedName>
    <alternativeName>
        <fullName evidence="1">tRNA 3 endonuclease</fullName>
    </alternativeName>
    <alternativeName>
        <fullName evidence="1">tRNase Z</fullName>
    </alternativeName>
</protein>